<comment type="similarity">
    <text evidence="1">Belongs to the UPF0173 family.</text>
</comment>
<gene>
    <name type="ordered locus">Acid_3917</name>
</gene>
<dbReference type="EMBL" id="CP000473">
    <property type="protein sequence ID" value="ABJ84884.1"/>
    <property type="molecule type" value="Genomic_DNA"/>
</dbReference>
<dbReference type="SMR" id="Q01ZN1"/>
<dbReference type="STRING" id="234267.Acid_3917"/>
<dbReference type="KEGG" id="sus:Acid_3917"/>
<dbReference type="eggNOG" id="COG2220">
    <property type="taxonomic scope" value="Bacteria"/>
</dbReference>
<dbReference type="HOGENOM" id="CLU_070010_4_0_0"/>
<dbReference type="InParanoid" id="Q01ZN1"/>
<dbReference type="OrthoDB" id="9789133at2"/>
<dbReference type="GO" id="GO:0016787">
    <property type="term" value="F:hydrolase activity"/>
    <property type="evidence" value="ECO:0007669"/>
    <property type="project" value="UniProtKB-UniRule"/>
</dbReference>
<dbReference type="Gene3D" id="3.60.15.10">
    <property type="entry name" value="Ribonuclease Z/Hydroxyacylglutathione hydrolase-like"/>
    <property type="match status" value="1"/>
</dbReference>
<dbReference type="HAMAP" id="MF_00457">
    <property type="entry name" value="UPF0173"/>
    <property type="match status" value="1"/>
</dbReference>
<dbReference type="InterPro" id="IPR001279">
    <property type="entry name" value="Metallo-B-lactamas"/>
</dbReference>
<dbReference type="InterPro" id="IPR036866">
    <property type="entry name" value="RibonucZ/Hydroxyglut_hydro"/>
</dbReference>
<dbReference type="InterPro" id="IPR022877">
    <property type="entry name" value="UPF0173"/>
</dbReference>
<dbReference type="InterPro" id="IPR050114">
    <property type="entry name" value="UPF0173_UPF0282_UlaG_hydrolase"/>
</dbReference>
<dbReference type="NCBIfam" id="NF001911">
    <property type="entry name" value="PRK00685.1"/>
    <property type="match status" value="1"/>
</dbReference>
<dbReference type="PANTHER" id="PTHR43546:SF3">
    <property type="entry name" value="UPF0173 METAL-DEPENDENT HYDROLASE MJ1163"/>
    <property type="match status" value="1"/>
</dbReference>
<dbReference type="PANTHER" id="PTHR43546">
    <property type="entry name" value="UPF0173 METAL-DEPENDENT HYDROLASE MJ1163-RELATED"/>
    <property type="match status" value="1"/>
</dbReference>
<dbReference type="Pfam" id="PF12706">
    <property type="entry name" value="Lactamase_B_2"/>
    <property type="match status" value="1"/>
</dbReference>
<dbReference type="SMART" id="SM00849">
    <property type="entry name" value="Lactamase_B"/>
    <property type="match status" value="1"/>
</dbReference>
<dbReference type="SUPFAM" id="SSF56281">
    <property type="entry name" value="Metallo-hydrolase/oxidoreductase"/>
    <property type="match status" value="1"/>
</dbReference>
<proteinExistence type="inferred from homology"/>
<sequence>MEITWLGHGTFQFRLPSGQVLVMDPWIDGNPAYPKGCKIDRVDTICISHGHFDHIHDAVPLAKQFDPEVVAIFETAHWLESKGVAKTRPMNKGGSQKVGEVMVTMTHAVHSCGIVDEGKIIYGGEAAGYVLHLPDKRVIYFSGDTNVFSDMALIEQLYHPELAFLPIGDLYTMSPHEAALACRLLRARKVIPMHFGTFPPLTGRPDDLRERIRGLETEVWALEPGKPVQW</sequence>
<accession>Q01ZN1</accession>
<feature type="chain" id="PRO_0000367218" description="UPF0173 metal-dependent hydrolase Acid_3917">
    <location>
        <begin position="1"/>
        <end position="230"/>
    </location>
</feature>
<organism>
    <name type="scientific">Solibacter usitatus (strain Ellin6076)</name>
    <dbReference type="NCBI Taxonomy" id="234267"/>
    <lineage>
        <taxon>Bacteria</taxon>
        <taxon>Pseudomonadati</taxon>
        <taxon>Acidobacteriota</taxon>
        <taxon>Terriglobia</taxon>
        <taxon>Bryobacterales</taxon>
        <taxon>Solibacteraceae</taxon>
        <taxon>Candidatus Solibacter</taxon>
    </lineage>
</organism>
<name>Y3917_SOLUE</name>
<protein>
    <recommendedName>
        <fullName evidence="1">UPF0173 metal-dependent hydrolase Acid_3917</fullName>
    </recommendedName>
</protein>
<keyword id="KW-0378">Hydrolase</keyword>
<reference key="1">
    <citation type="journal article" date="2009" name="Appl. Environ. Microbiol.">
        <title>Three genomes from the phylum Acidobacteria provide insight into the lifestyles of these microorganisms in soils.</title>
        <authorList>
            <person name="Ward N.L."/>
            <person name="Challacombe J.F."/>
            <person name="Janssen P.H."/>
            <person name="Henrissat B."/>
            <person name="Coutinho P.M."/>
            <person name="Wu M."/>
            <person name="Xie G."/>
            <person name="Haft D.H."/>
            <person name="Sait M."/>
            <person name="Badger J."/>
            <person name="Barabote R.D."/>
            <person name="Bradley B."/>
            <person name="Brettin T.S."/>
            <person name="Brinkac L.M."/>
            <person name="Bruce D."/>
            <person name="Creasy T."/>
            <person name="Daugherty S.C."/>
            <person name="Davidsen T.M."/>
            <person name="DeBoy R.T."/>
            <person name="Detter J.C."/>
            <person name="Dodson R.J."/>
            <person name="Durkin A.S."/>
            <person name="Ganapathy A."/>
            <person name="Gwinn-Giglio M."/>
            <person name="Han C.S."/>
            <person name="Khouri H."/>
            <person name="Kiss H."/>
            <person name="Kothari S.P."/>
            <person name="Madupu R."/>
            <person name="Nelson K.E."/>
            <person name="Nelson W.C."/>
            <person name="Paulsen I."/>
            <person name="Penn K."/>
            <person name="Ren Q."/>
            <person name="Rosovitz M.J."/>
            <person name="Selengut J.D."/>
            <person name="Shrivastava S."/>
            <person name="Sullivan S.A."/>
            <person name="Tapia R."/>
            <person name="Thompson L.S."/>
            <person name="Watkins K.L."/>
            <person name="Yang Q."/>
            <person name="Yu C."/>
            <person name="Zafar N."/>
            <person name="Zhou L."/>
            <person name="Kuske C.R."/>
        </authorList>
    </citation>
    <scope>NUCLEOTIDE SEQUENCE [LARGE SCALE GENOMIC DNA]</scope>
    <source>
        <strain>Ellin6076</strain>
    </source>
</reference>
<evidence type="ECO:0000255" key="1">
    <source>
        <dbReference type="HAMAP-Rule" id="MF_00457"/>
    </source>
</evidence>